<reference key="1">
    <citation type="journal article" date="2009" name="PLoS Genet.">
        <title>Organised genome dynamics in the Escherichia coli species results in highly diverse adaptive paths.</title>
        <authorList>
            <person name="Touchon M."/>
            <person name="Hoede C."/>
            <person name="Tenaillon O."/>
            <person name="Barbe V."/>
            <person name="Baeriswyl S."/>
            <person name="Bidet P."/>
            <person name="Bingen E."/>
            <person name="Bonacorsi S."/>
            <person name="Bouchier C."/>
            <person name="Bouvet O."/>
            <person name="Calteau A."/>
            <person name="Chiapello H."/>
            <person name="Clermont O."/>
            <person name="Cruveiller S."/>
            <person name="Danchin A."/>
            <person name="Diard M."/>
            <person name="Dossat C."/>
            <person name="Karoui M.E."/>
            <person name="Frapy E."/>
            <person name="Garry L."/>
            <person name="Ghigo J.M."/>
            <person name="Gilles A.M."/>
            <person name="Johnson J."/>
            <person name="Le Bouguenec C."/>
            <person name="Lescat M."/>
            <person name="Mangenot S."/>
            <person name="Martinez-Jehanne V."/>
            <person name="Matic I."/>
            <person name="Nassif X."/>
            <person name="Oztas S."/>
            <person name="Petit M.A."/>
            <person name="Pichon C."/>
            <person name="Rouy Z."/>
            <person name="Ruf C.S."/>
            <person name="Schneider D."/>
            <person name="Tourret J."/>
            <person name="Vacherie B."/>
            <person name="Vallenet D."/>
            <person name="Medigue C."/>
            <person name="Rocha E.P.C."/>
            <person name="Denamur E."/>
        </authorList>
    </citation>
    <scope>NUCLEOTIDE SEQUENCE [LARGE SCALE GENOMIC DNA]</scope>
    <source>
        <strain>IAI39 / ExPEC</strain>
    </source>
</reference>
<organism>
    <name type="scientific">Escherichia coli O7:K1 (strain IAI39 / ExPEC)</name>
    <dbReference type="NCBI Taxonomy" id="585057"/>
    <lineage>
        <taxon>Bacteria</taxon>
        <taxon>Pseudomonadati</taxon>
        <taxon>Pseudomonadota</taxon>
        <taxon>Gammaproteobacteria</taxon>
        <taxon>Enterobacterales</taxon>
        <taxon>Enterobacteriaceae</taxon>
        <taxon>Escherichia</taxon>
    </lineage>
</organism>
<name>LIPB_ECO7I</name>
<keyword id="KW-0012">Acyltransferase</keyword>
<keyword id="KW-0963">Cytoplasm</keyword>
<keyword id="KW-0808">Transferase</keyword>
<protein>
    <recommendedName>
        <fullName evidence="1">Octanoyltransferase</fullName>
        <ecNumber evidence="1">2.3.1.181</ecNumber>
    </recommendedName>
    <alternativeName>
        <fullName evidence="1">Lipoate-protein ligase B</fullName>
    </alternativeName>
    <alternativeName>
        <fullName evidence="1">Lipoyl/octanoyl transferase</fullName>
    </alternativeName>
    <alternativeName>
        <fullName evidence="1">Octanoyl-[acyl-carrier-protein]-protein N-octanoyltransferase</fullName>
    </alternativeName>
</protein>
<dbReference type="EC" id="2.3.1.181" evidence="1"/>
<dbReference type="EMBL" id="CU928164">
    <property type="protein sequence ID" value="CAR16742.1"/>
    <property type="molecule type" value="Genomic_DNA"/>
</dbReference>
<dbReference type="RefSeq" id="WP_000284040.1">
    <property type="nucleotide sequence ID" value="NC_011750.1"/>
</dbReference>
<dbReference type="RefSeq" id="YP_002406631.1">
    <property type="nucleotide sequence ID" value="NC_011750.1"/>
</dbReference>
<dbReference type="SMR" id="B7NLY9"/>
<dbReference type="STRING" id="585057.ECIAI39_0605"/>
<dbReference type="KEGG" id="ect:ECIAI39_0605"/>
<dbReference type="PATRIC" id="fig|585057.6.peg.643"/>
<dbReference type="HOGENOM" id="CLU_035168_3_1_6"/>
<dbReference type="UniPathway" id="UPA00538">
    <property type="reaction ID" value="UER00592"/>
</dbReference>
<dbReference type="Proteomes" id="UP000000749">
    <property type="component" value="Chromosome"/>
</dbReference>
<dbReference type="GO" id="GO:0005737">
    <property type="term" value="C:cytoplasm"/>
    <property type="evidence" value="ECO:0007669"/>
    <property type="project" value="UniProtKB-SubCell"/>
</dbReference>
<dbReference type="GO" id="GO:0033819">
    <property type="term" value="F:lipoyl(octanoyl) transferase activity"/>
    <property type="evidence" value="ECO:0007669"/>
    <property type="project" value="UniProtKB-EC"/>
</dbReference>
<dbReference type="GO" id="GO:0036211">
    <property type="term" value="P:protein modification process"/>
    <property type="evidence" value="ECO:0007669"/>
    <property type="project" value="InterPro"/>
</dbReference>
<dbReference type="CDD" id="cd16444">
    <property type="entry name" value="LipB"/>
    <property type="match status" value="1"/>
</dbReference>
<dbReference type="FunFam" id="3.30.930.10:FF:000020">
    <property type="entry name" value="Octanoyltransferase"/>
    <property type="match status" value="1"/>
</dbReference>
<dbReference type="Gene3D" id="3.30.930.10">
    <property type="entry name" value="Bira Bifunctional Protein, Domain 2"/>
    <property type="match status" value="1"/>
</dbReference>
<dbReference type="HAMAP" id="MF_00013">
    <property type="entry name" value="LipB"/>
    <property type="match status" value="1"/>
</dbReference>
<dbReference type="InterPro" id="IPR045864">
    <property type="entry name" value="aa-tRNA-synth_II/BPL/LPL"/>
</dbReference>
<dbReference type="InterPro" id="IPR004143">
    <property type="entry name" value="BPL_LPL_catalytic"/>
</dbReference>
<dbReference type="InterPro" id="IPR000544">
    <property type="entry name" value="Octanoyltransferase"/>
</dbReference>
<dbReference type="InterPro" id="IPR020605">
    <property type="entry name" value="Octanoyltransferase_CS"/>
</dbReference>
<dbReference type="NCBIfam" id="TIGR00214">
    <property type="entry name" value="lipB"/>
    <property type="match status" value="1"/>
</dbReference>
<dbReference type="NCBIfam" id="NF010922">
    <property type="entry name" value="PRK14342.1"/>
    <property type="match status" value="1"/>
</dbReference>
<dbReference type="PANTHER" id="PTHR10993:SF7">
    <property type="entry name" value="LIPOYLTRANSFERASE 2, MITOCHONDRIAL-RELATED"/>
    <property type="match status" value="1"/>
</dbReference>
<dbReference type="PANTHER" id="PTHR10993">
    <property type="entry name" value="OCTANOYLTRANSFERASE"/>
    <property type="match status" value="1"/>
</dbReference>
<dbReference type="Pfam" id="PF21948">
    <property type="entry name" value="LplA-B_cat"/>
    <property type="match status" value="1"/>
</dbReference>
<dbReference type="PIRSF" id="PIRSF016262">
    <property type="entry name" value="LPLase"/>
    <property type="match status" value="1"/>
</dbReference>
<dbReference type="SUPFAM" id="SSF55681">
    <property type="entry name" value="Class II aaRS and biotin synthetases"/>
    <property type="match status" value="1"/>
</dbReference>
<dbReference type="PROSITE" id="PS51733">
    <property type="entry name" value="BPL_LPL_CATALYTIC"/>
    <property type="match status" value="1"/>
</dbReference>
<dbReference type="PROSITE" id="PS01313">
    <property type="entry name" value="LIPB"/>
    <property type="match status" value="1"/>
</dbReference>
<sequence length="213" mass="23897">MYQDKILVRQLGLQPYEPISQAMHEFTDTRDESTLDEIWLVEHYPVFTQGQAGKAEHILMPGDIPVIQSDRGGQVTYHGPGQQVMYVLLNLKRRKLGVRELVTLLEQTVVNTLAELGIEAHPRADAPGVYVGEKKICSLGLRIRRGCSFHGLALNVNMDLSPFLRINPCGYAGMEMAKISQWKPEATTNNIAPRLLENILALLNNPDFEYITA</sequence>
<accession>B7NLY9</accession>
<proteinExistence type="inferred from homology"/>
<gene>
    <name evidence="1" type="primary">lipB</name>
    <name type="ordered locus">ECIAI39_0605</name>
</gene>
<evidence type="ECO:0000255" key="1">
    <source>
        <dbReference type="HAMAP-Rule" id="MF_00013"/>
    </source>
</evidence>
<evidence type="ECO:0000255" key="2">
    <source>
        <dbReference type="PROSITE-ProRule" id="PRU01067"/>
    </source>
</evidence>
<feature type="chain" id="PRO_1000116281" description="Octanoyltransferase">
    <location>
        <begin position="1"/>
        <end position="213"/>
    </location>
</feature>
<feature type="domain" description="BPL/LPL catalytic" evidence="2">
    <location>
        <begin position="32"/>
        <end position="207"/>
    </location>
</feature>
<feature type="active site" description="Acyl-thioester intermediate" evidence="1">
    <location>
        <position position="169"/>
    </location>
</feature>
<feature type="binding site" evidence="1">
    <location>
        <begin position="71"/>
        <end position="78"/>
    </location>
    <ligand>
        <name>substrate</name>
    </ligand>
</feature>
<feature type="binding site" evidence="1">
    <location>
        <begin position="138"/>
        <end position="140"/>
    </location>
    <ligand>
        <name>substrate</name>
    </ligand>
</feature>
<feature type="binding site" evidence="1">
    <location>
        <begin position="151"/>
        <end position="153"/>
    </location>
    <ligand>
        <name>substrate</name>
    </ligand>
</feature>
<feature type="site" description="Lowers pKa of active site Cys" evidence="1">
    <location>
        <position position="135"/>
    </location>
</feature>
<comment type="function">
    <text evidence="1">Catalyzes the transfer of endogenously produced octanoic acid from octanoyl-acyl-carrier-protein onto the lipoyl domains of lipoate-dependent enzymes. Lipoyl-ACP can also act as a substrate although octanoyl-ACP is likely to be the physiological substrate.</text>
</comment>
<comment type="catalytic activity">
    <reaction evidence="1">
        <text>octanoyl-[ACP] + L-lysyl-[protein] = N(6)-octanoyl-L-lysyl-[protein] + holo-[ACP] + H(+)</text>
        <dbReference type="Rhea" id="RHEA:17665"/>
        <dbReference type="Rhea" id="RHEA-COMP:9636"/>
        <dbReference type="Rhea" id="RHEA-COMP:9685"/>
        <dbReference type="Rhea" id="RHEA-COMP:9752"/>
        <dbReference type="Rhea" id="RHEA-COMP:9928"/>
        <dbReference type="ChEBI" id="CHEBI:15378"/>
        <dbReference type="ChEBI" id="CHEBI:29969"/>
        <dbReference type="ChEBI" id="CHEBI:64479"/>
        <dbReference type="ChEBI" id="CHEBI:78463"/>
        <dbReference type="ChEBI" id="CHEBI:78809"/>
        <dbReference type="EC" id="2.3.1.181"/>
    </reaction>
</comment>
<comment type="pathway">
    <text evidence="1">Protein modification; protein lipoylation via endogenous pathway; protein N(6)-(lipoyl)lysine from octanoyl-[acyl-carrier-protein]: step 1/2.</text>
</comment>
<comment type="subcellular location">
    <subcellularLocation>
        <location evidence="1">Cytoplasm</location>
    </subcellularLocation>
</comment>
<comment type="miscellaneous">
    <text evidence="1">In the reaction, the free carboxyl group of octanoic acid is attached via an amide linkage to the epsilon-amino group of a specific lysine residue of lipoyl domains of lipoate-dependent enzymes.</text>
</comment>
<comment type="similarity">
    <text evidence="1">Belongs to the LipB family.</text>
</comment>